<reference key="1">
    <citation type="journal article" date="2008" name="J. Bacteriol.">
        <title>Genome sequence of Staphylococcus aureus strain Newman and comparative analysis of staphylococcal genomes: polymorphism and evolution of two major pathogenicity islands.</title>
        <authorList>
            <person name="Baba T."/>
            <person name="Bae T."/>
            <person name="Schneewind O."/>
            <person name="Takeuchi F."/>
            <person name="Hiramatsu K."/>
        </authorList>
    </citation>
    <scope>NUCLEOTIDE SEQUENCE [LARGE SCALE GENOMIC DNA]</scope>
    <source>
        <strain>Newman</strain>
    </source>
</reference>
<keyword id="KW-0963">Cytoplasm</keyword>
<keyword id="KW-0210">Decarboxylase</keyword>
<keyword id="KW-0456">Lyase</keyword>
<keyword id="KW-0627">Porphyrin biosynthesis</keyword>
<accession>A6QI15</accession>
<gene>
    <name evidence="1" type="primary">hemE</name>
    <name type="ordered locus">NWMN_1725</name>
</gene>
<name>DCUP_STAAE</name>
<evidence type="ECO:0000255" key="1">
    <source>
        <dbReference type="HAMAP-Rule" id="MF_00218"/>
    </source>
</evidence>
<comment type="function">
    <text evidence="1">Catalyzes the decarboxylation of four acetate groups of uroporphyrinogen-III to yield coproporphyrinogen-III.</text>
</comment>
<comment type="catalytic activity">
    <reaction evidence="1">
        <text>uroporphyrinogen III + 4 H(+) = coproporphyrinogen III + 4 CO2</text>
        <dbReference type="Rhea" id="RHEA:19865"/>
        <dbReference type="ChEBI" id="CHEBI:15378"/>
        <dbReference type="ChEBI" id="CHEBI:16526"/>
        <dbReference type="ChEBI" id="CHEBI:57308"/>
        <dbReference type="ChEBI" id="CHEBI:57309"/>
        <dbReference type="EC" id="4.1.1.37"/>
    </reaction>
</comment>
<comment type="pathway">
    <text evidence="1">Porphyrin-containing compound metabolism; protoporphyrin-IX biosynthesis; coproporphyrinogen-III from 5-aminolevulinate: step 4/4.</text>
</comment>
<comment type="subunit">
    <text evidence="1">Homodimer.</text>
</comment>
<comment type="subcellular location">
    <subcellularLocation>
        <location evidence="1">Cytoplasm</location>
    </subcellularLocation>
</comment>
<comment type="similarity">
    <text evidence="1">Belongs to the uroporphyrinogen decarboxylase family.</text>
</comment>
<proteinExistence type="inferred from homology"/>
<dbReference type="EC" id="4.1.1.37" evidence="1"/>
<dbReference type="EMBL" id="AP009351">
    <property type="protein sequence ID" value="BAF67997.1"/>
    <property type="molecule type" value="Genomic_DNA"/>
</dbReference>
<dbReference type="RefSeq" id="WP_000233526.1">
    <property type="nucleotide sequence ID" value="NZ_JBBIAE010000013.1"/>
</dbReference>
<dbReference type="SMR" id="A6QI15"/>
<dbReference type="KEGG" id="sae:NWMN_1725"/>
<dbReference type="HOGENOM" id="CLU_040933_0_1_9"/>
<dbReference type="UniPathway" id="UPA00251">
    <property type="reaction ID" value="UER00321"/>
</dbReference>
<dbReference type="Proteomes" id="UP000006386">
    <property type="component" value="Chromosome"/>
</dbReference>
<dbReference type="GO" id="GO:0005829">
    <property type="term" value="C:cytosol"/>
    <property type="evidence" value="ECO:0007669"/>
    <property type="project" value="TreeGrafter"/>
</dbReference>
<dbReference type="GO" id="GO:0004853">
    <property type="term" value="F:uroporphyrinogen decarboxylase activity"/>
    <property type="evidence" value="ECO:0007669"/>
    <property type="project" value="UniProtKB-UniRule"/>
</dbReference>
<dbReference type="GO" id="GO:0006782">
    <property type="term" value="P:protoporphyrinogen IX biosynthetic process"/>
    <property type="evidence" value="ECO:0007669"/>
    <property type="project" value="UniProtKB-UniRule"/>
</dbReference>
<dbReference type="CDD" id="cd00717">
    <property type="entry name" value="URO-D"/>
    <property type="match status" value="1"/>
</dbReference>
<dbReference type="FunFam" id="3.20.20.210:FF:000005">
    <property type="entry name" value="Uroporphyrinogen decarboxylase"/>
    <property type="match status" value="1"/>
</dbReference>
<dbReference type="Gene3D" id="3.20.20.210">
    <property type="match status" value="1"/>
</dbReference>
<dbReference type="HAMAP" id="MF_00218">
    <property type="entry name" value="URO_D"/>
    <property type="match status" value="1"/>
</dbReference>
<dbReference type="InterPro" id="IPR038071">
    <property type="entry name" value="UROD/MetE-like_sf"/>
</dbReference>
<dbReference type="InterPro" id="IPR006361">
    <property type="entry name" value="Uroporphyrinogen_deCO2ase_HemE"/>
</dbReference>
<dbReference type="InterPro" id="IPR000257">
    <property type="entry name" value="Uroporphyrinogen_deCOase"/>
</dbReference>
<dbReference type="NCBIfam" id="TIGR01464">
    <property type="entry name" value="hemE"/>
    <property type="match status" value="1"/>
</dbReference>
<dbReference type="PANTHER" id="PTHR21091">
    <property type="entry name" value="METHYLTETRAHYDROFOLATE:HOMOCYSTEINE METHYLTRANSFERASE RELATED"/>
    <property type="match status" value="1"/>
</dbReference>
<dbReference type="PANTHER" id="PTHR21091:SF169">
    <property type="entry name" value="UROPORPHYRINOGEN DECARBOXYLASE"/>
    <property type="match status" value="1"/>
</dbReference>
<dbReference type="Pfam" id="PF01208">
    <property type="entry name" value="URO-D"/>
    <property type="match status" value="1"/>
</dbReference>
<dbReference type="SUPFAM" id="SSF51726">
    <property type="entry name" value="UROD/MetE-like"/>
    <property type="match status" value="1"/>
</dbReference>
<dbReference type="PROSITE" id="PS00906">
    <property type="entry name" value="UROD_1"/>
    <property type="match status" value="1"/>
</dbReference>
<dbReference type="PROSITE" id="PS00907">
    <property type="entry name" value="UROD_2"/>
    <property type="match status" value="1"/>
</dbReference>
<protein>
    <recommendedName>
        <fullName evidence="1">Uroporphyrinogen decarboxylase</fullName>
        <shortName evidence="1">UPD</shortName>
        <shortName evidence="1">URO-D</shortName>
        <ecNumber evidence="1">4.1.1.37</ecNumber>
    </recommendedName>
</protein>
<feature type="chain" id="PRO_1000071753" description="Uroporphyrinogen decarboxylase">
    <location>
        <begin position="1"/>
        <end position="345"/>
    </location>
</feature>
<feature type="binding site" evidence="1">
    <location>
        <begin position="27"/>
        <end position="31"/>
    </location>
    <ligand>
        <name>substrate</name>
    </ligand>
</feature>
<feature type="binding site" evidence="1">
    <location>
        <position position="46"/>
    </location>
    <ligand>
        <name>substrate</name>
    </ligand>
</feature>
<feature type="binding site" evidence="1">
    <location>
        <position position="76"/>
    </location>
    <ligand>
        <name>substrate</name>
    </ligand>
</feature>
<feature type="binding site" evidence="1">
    <location>
        <position position="152"/>
    </location>
    <ligand>
        <name>substrate</name>
    </ligand>
</feature>
<feature type="binding site" evidence="1">
    <location>
        <position position="207"/>
    </location>
    <ligand>
        <name>substrate</name>
    </ligand>
</feature>
<feature type="binding site" evidence="1">
    <location>
        <position position="321"/>
    </location>
    <ligand>
        <name>substrate</name>
    </ligand>
</feature>
<feature type="site" description="Transition state stabilizer" evidence="1">
    <location>
        <position position="76"/>
    </location>
</feature>
<sequence>MVHNKNNTILKMIKGEETSHTPVWFMRQAGRSQPEYRKLKEKYSLFDITHQPELCAYVTHLPVDNYHTDAAILYKDIMTPLKPIGVDVEIKSGIGPVIHNPIKTIQDVEKLSQIDPERDVPYVLDTIKLLTEEKLNVPLIGFTGAPFTLASYMIEGGPSKNYNFTKAMMYRDEATWFALMNHLVDVSVKYVTAQVEAGAELIQIFDSWVGALNVEDYRRYIKPHMIRLISEVKEKHDVPVILFGVGASHLINEWNDLPIDVLGLDWRTSINQAQQLGVTKTLQGNLDPSILLAPWNVIEERLKPILDQGMENGKHIFNLGHGVFPEVQPETLRKVSEFVHTYTQR</sequence>
<organism>
    <name type="scientific">Staphylococcus aureus (strain Newman)</name>
    <dbReference type="NCBI Taxonomy" id="426430"/>
    <lineage>
        <taxon>Bacteria</taxon>
        <taxon>Bacillati</taxon>
        <taxon>Bacillota</taxon>
        <taxon>Bacilli</taxon>
        <taxon>Bacillales</taxon>
        <taxon>Staphylococcaceae</taxon>
        <taxon>Staphylococcus</taxon>
    </lineage>
</organism>